<gene>
    <name type="ordered locus">LCA_0389</name>
</gene>
<keyword id="KW-0963">Cytoplasm</keyword>
<keyword id="KW-0378">Hydrolase</keyword>
<keyword id="KW-0540">Nuclease</keyword>
<keyword id="KW-1185">Reference proteome</keyword>
<keyword id="KW-0690">Ribosome biogenesis</keyword>
<sequence>MRLMGFDVGSRTVGIAVSDLFGWTAQGVEIIRINEDESEFGLDRVKELVAQHQVTGFVLGLPKNMNNSIGPRAVKAQEYGAMLTELFPEIPVDYIDERLTTVQAERMLVEQADTSRKKRKQVIDKLAAVMILQNYLDAKGPLTKQGY</sequence>
<proteinExistence type="inferred from homology"/>
<protein>
    <recommendedName>
        <fullName evidence="1">Putative pre-16S rRNA nuclease</fullName>
        <ecNumber evidence="1">3.1.-.-</ecNumber>
    </recommendedName>
</protein>
<reference key="1">
    <citation type="journal article" date="2005" name="Nat. Biotechnol.">
        <title>The complete genome sequence of the meat-borne lactic acid bacterium Lactobacillus sakei 23K.</title>
        <authorList>
            <person name="Chaillou S."/>
            <person name="Champomier-Verges M.-C."/>
            <person name="Cornet M."/>
            <person name="Crutz-Le Coq A.-M."/>
            <person name="Dudez A.-M."/>
            <person name="Martin V."/>
            <person name="Beaufils S."/>
            <person name="Darbon-Rongere E."/>
            <person name="Bossy R."/>
            <person name="Loux V."/>
            <person name="Zagorec M."/>
        </authorList>
    </citation>
    <scope>NUCLEOTIDE SEQUENCE [LARGE SCALE GENOMIC DNA]</scope>
    <source>
        <strain>23K</strain>
    </source>
</reference>
<name>YQGF_LATSS</name>
<feature type="chain" id="PRO_0000257543" description="Putative pre-16S rRNA nuclease">
    <location>
        <begin position="1"/>
        <end position="147"/>
    </location>
</feature>
<dbReference type="EC" id="3.1.-.-" evidence="1"/>
<dbReference type="EMBL" id="CR936503">
    <property type="protein sequence ID" value="CAI54690.1"/>
    <property type="molecule type" value="Genomic_DNA"/>
</dbReference>
<dbReference type="SMR" id="Q38YN7"/>
<dbReference type="STRING" id="314315.LCA_0389"/>
<dbReference type="KEGG" id="lsa:LCA_0389"/>
<dbReference type="eggNOG" id="COG0816">
    <property type="taxonomic scope" value="Bacteria"/>
</dbReference>
<dbReference type="HOGENOM" id="CLU_098240_2_0_9"/>
<dbReference type="OrthoDB" id="9796140at2"/>
<dbReference type="Proteomes" id="UP000002707">
    <property type="component" value="Chromosome"/>
</dbReference>
<dbReference type="GO" id="GO:0005829">
    <property type="term" value="C:cytosol"/>
    <property type="evidence" value="ECO:0007669"/>
    <property type="project" value="TreeGrafter"/>
</dbReference>
<dbReference type="GO" id="GO:0004518">
    <property type="term" value="F:nuclease activity"/>
    <property type="evidence" value="ECO:0007669"/>
    <property type="project" value="UniProtKB-KW"/>
</dbReference>
<dbReference type="GO" id="GO:0000967">
    <property type="term" value="P:rRNA 5'-end processing"/>
    <property type="evidence" value="ECO:0007669"/>
    <property type="project" value="UniProtKB-UniRule"/>
</dbReference>
<dbReference type="CDD" id="cd16964">
    <property type="entry name" value="YqgF"/>
    <property type="match status" value="1"/>
</dbReference>
<dbReference type="Gene3D" id="3.30.420.140">
    <property type="entry name" value="YqgF/RNase H-like domain"/>
    <property type="match status" value="1"/>
</dbReference>
<dbReference type="HAMAP" id="MF_00651">
    <property type="entry name" value="Nuclease_YqgF"/>
    <property type="match status" value="1"/>
</dbReference>
<dbReference type="InterPro" id="IPR012337">
    <property type="entry name" value="RNaseH-like_sf"/>
</dbReference>
<dbReference type="InterPro" id="IPR005227">
    <property type="entry name" value="YqgF"/>
</dbReference>
<dbReference type="InterPro" id="IPR006641">
    <property type="entry name" value="YqgF/RNaseH-like_dom"/>
</dbReference>
<dbReference type="InterPro" id="IPR037027">
    <property type="entry name" value="YqgF/RNaseH-like_dom_sf"/>
</dbReference>
<dbReference type="NCBIfam" id="TIGR00250">
    <property type="entry name" value="RNAse_H_YqgF"/>
    <property type="match status" value="1"/>
</dbReference>
<dbReference type="PANTHER" id="PTHR33317">
    <property type="entry name" value="POLYNUCLEOTIDYL TRANSFERASE, RIBONUCLEASE H-LIKE SUPERFAMILY PROTEIN"/>
    <property type="match status" value="1"/>
</dbReference>
<dbReference type="PANTHER" id="PTHR33317:SF4">
    <property type="entry name" value="POLYNUCLEOTIDYL TRANSFERASE, RIBONUCLEASE H-LIKE SUPERFAMILY PROTEIN"/>
    <property type="match status" value="1"/>
</dbReference>
<dbReference type="Pfam" id="PF03652">
    <property type="entry name" value="RuvX"/>
    <property type="match status" value="1"/>
</dbReference>
<dbReference type="SMART" id="SM00732">
    <property type="entry name" value="YqgFc"/>
    <property type="match status" value="1"/>
</dbReference>
<dbReference type="SUPFAM" id="SSF53098">
    <property type="entry name" value="Ribonuclease H-like"/>
    <property type="match status" value="1"/>
</dbReference>
<organism>
    <name type="scientific">Latilactobacillus sakei subsp. sakei (strain 23K)</name>
    <name type="common">Lactobacillus sakei subsp. sakei</name>
    <dbReference type="NCBI Taxonomy" id="314315"/>
    <lineage>
        <taxon>Bacteria</taxon>
        <taxon>Bacillati</taxon>
        <taxon>Bacillota</taxon>
        <taxon>Bacilli</taxon>
        <taxon>Lactobacillales</taxon>
        <taxon>Lactobacillaceae</taxon>
        <taxon>Latilactobacillus</taxon>
    </lineage>
</organism>
<evidence type="ECO:0000255" key="1">
    <source>
        <dbReference type="HAMAP-Rule" id="MF_00651"/>
    </source>
</evidence>
<comment type="function">
    <text evidence="1">Could be a nuclease involved in processing of the 5'-end of pre-16S rRNA.</text>
</comment>
<comment type="subcellular location">
    <subcellularLocation>
        <location evidence="1">Cytoplasm</location>
    </subcellularLocation>
</comment>
<comment type="similarity">
    <text evidence="1">Belongs to the YqgF nuclease family.</text>
</comment>
<accession>Q38YN7</accession>